<proteinExistence type="inferred from homology"/>
<sequence>MGNLLNSIHSPADIKHFSVPQLEALAQEIRDRLIQSVARTGGHIGPNLGVVELTIAMHYVFDTPQDRFVFDVSHQAYVHKLLTGRANRFDTLRQPGGLNGFMLRSESQHDSYGAGHAGTALSAALGMAVARDIAGGHEHVVALAGDAAFTNGISFEALNNIADQTRRLIVVLNDNEWSIDRNVGAIARYLHKIVTNEHVSQFHDSAARLLKRIGGPAAANMVRRAEEAAKGMLWPSVLFEEFGLTYYGPIDGHNLSLLIDTFKFLKQQDRPVLLHAITQKGRGFEPALAGQKKFHGLGPFDPETGETSSSGQPTYSEVFARSLVKLADQNDKVVAITAAMPNGTGLDHFRPHHPARYFDVGIAEEHAVIFAAGMATRGFKPYCAIYSTFLQRAFDPIVHDVCLQNLPVVFCMDRGGLSGDDGPTHHGLFDISYLRGIPNIVHMVPADEDELADMMYTAMLHDGPSAIRYPRGTGPGHAVKQQPEALPIGKAKVLHEGEDIAILGLGALLPMAEQIREELARQGYRAAVINPRFVKPVDTELLAHYADRVTAFLTLEDHVLMGGFGSAVMEELNALGKSTPVVRIGWPDRFIEHGKVDQLRARYGISVEAAMEKLAPYLTRSAPLSVR</sequence>
<evidence type="ECO:0000255" key="1">
    <source>
        <dbReference type="HAMAP-Rule" id="MF_00315"/>
    </source>
</evidence>
<name>DXS_ACIC5</name>
<organism>
    <name type="scientific">Acidobacterium capsulatum (strain ATCC 51196 / DSM 11244 / BCRC 80197 / JCM 7670 / NBRC 15755 / NCIMB 13165 / 161)</name>
    <dbReference type="NCBI Taxonomy" id="240015"/>
    <lineage>
        <taxon>Bacteria</taxon>
        <taxon>Pseudomonadati</taxon>
        <taxon>Acidobacteriota</taxon>
        <taxon>Terriglobia</taxon>
        <taxon>Terriglobales</taxon>
        <taxon>Acidobacteriaceae</taxon>
        <taxon>Acidobacterium</taxon>
    </lineage>
</organism>
<reference key="1">
    <citation type="journal article" date="2009" name="Appl. Environ. Microbiol.">
        <title>Three genomes from the phylum Acidobacteria provide insight into the lifestyles of these microorganisms in soils.</title>
        <authorList>
            <person name="Ward N.L."/>
            <person name="Challacombe J.F."/>
            <person name="Janssen P.H."/>
            <person name="Henrissat B."/>
            <person name="Coutinho P.M."/>
            <person name="Wu M."/>
            <person name="Xie G."/>
            <person name="Haft D.H."/>
            <person name="Sait M."/>
            <person name="Badger J."/>
            <person name="Barabote R.D."/>
            <person name="Bradley B."/>
            <person name="Brettin T.S."/>
            <person name="Brinkac L.M."/>
            <person name="Bruce D."/>
            <person name="Creasy T."/>
            <person name="Daugherty S.C."/>
            <person name="Davidsen T.M."/>
            <person name="DeBoy R.T."/>
            <person name="Detter J.C."/>
            <person name="Dodson R.J."/>
            <person name="Durkin A.S."/>
            <person name="Ganapathy A."/>
            <person name="Gwinn-Giglio M."/>
            <person name="Han C.S."/>
            <person name="Khouri H."/>
            <person name="Kiss H."/>
            <person name="Kothari S.P."/>
            <person name="Madupu R."/>
            <person name="Nelson K.E."/>
            <person name="Nelson W.C."/>
            <person name="Paulsen I."/>
            <person name="Penn K."/>
            <person name="Ren Q."/>
            <person name="Rosovitz M.J."/>
            <person name="Selengut J.D."/>
            <person name="Shrivastava S."/>
            <person name="Sullivan S.A."/>
            <person name="Tapia R."/>
            <person name="Thompson L.S."/>
            <person name="Watkins K.L."/>
            <person name="Yang Q."/>
            <person name="Yu C."/>
            <person name="Zafar N."/>
            <person name="Zhou L."/>
            <person name="Kuske C.R."/>
        </authorList>
    </citation>
    <scope>NUCLEOTIDE SEQUENCE [LARGE SCALE GENOMIC DNA]</scope>
    <source>
        <strain>ATCC 51196 / DSM 11244 / BCRC 80197 / JCM 7670 / NBRC 15755 / NCIMB 13165 / 161</strain>
    </source>
</reference>
<comment type="function">
    <text evidence="1">Catalyzes the acyloin condensation reaction between C atoms 2 and 3 of pyruvate and glyceraldehyde 3-phosphate to yield 1-deoxy-D-xylulose-5-phosphate (DXP).</text>
</comment>
<comment type="catalytic activity">
    <reaction evidence="1">
        <text>D-glyceraldehyde 3-phosphate + pyruvate + H(+) = 1-deoxy-D-xylulose 5-phosphate + CO2</text>
        <dbReference type="Rhea" id="RHEA:12605"/>
        <dbReference type="ChEBI" id="CHEBI:15361"/>
        <dbReference type="ChEBI" id="CHEBI:15378"/>
        <dbReference type="ChEBI" id="CHEBI:16526"/>
        <dbReference type="ChEBI" id="CHEBI:57792"/>
        <dbReference type="ChEBI" id="CHEBI:59776"/>
        <dbReference type="EC" id="2.2.1.7"/>
    </reaction>
</comment>
<comment type="cofactor">
    <cofactor evidence="1">
        <name>Mg(2+)</name>
        <dbReference type="ChEBI" id="CHEBI:18420"/>
    </cofactor>
    <text evidence="1">Binds 1 Mg(2+) ion per subunit.</text>
</comment>
<comment type="cofactor">
    <cofactor evidence="1">
        <name>thiamine diphosphate</name>
        <dbReference type="ChEBI" id="CHEBI:58937"/>
    </cofactor>
    <text evidence="1">Binds 1 thiamine pyrophosphate per subunit.</text>
</comment>
<comment type="pathway">
    <text evidence="1">Metabolic intermediate biosynthesis; 1-deoxy-D-xylulose 5-phosphate biosynthesis; 1-deoxy-D-xylulose 5-phosphate from D-glyceraldehyde 3-phosphate and pyruvate: step 1/1.</text>
</comment>
<comment type="subunit">
    <text evidence="1">Homodimer.</text>
</comment>
<comment type="similarity">
    <text evidence="1">Belongs to the transketolase family. DXPS subfamily.</text>
</comment>
<accession>C1F3C4</accession>
<feature type="chain" id="PRO_1000132915" description="1-deoxy-D-xylulose-5-phosphate synthase">
    <location>
        <begin position="1"/>
        <end position="627"/>
    </location>
</feature>
<feature type="binding site" evidence="1">
    <location>
        <position position="74"/>
    </location>
    <ligand>
        <name>thiamine diphosphate</name>
        <dbReference type="ChEBI" id="CHEBI:58937"/>
    </ligand>
</feature>
<feature type="binding site" evidence="1">
    <location>
        <begin position="115"/>
        <end position="117"/>
    </location>
    <ligand>
        <name>thiamine diphosphate</name>
        <dbReference type="ChEBI" id="CHEBI:58937"/>
    </ligand>
</feature>
<feature type="binding site" evidence="1">
    <location>
        <position position="146"/>
    </location>
    <ligand>
        <name>Mg(2+)</name>
        <dbReference type="ChEBI" id="CHEBI:18420"/>
    </ligand>
</feature>
<feature type="binding site" evidence="1">
    <location>
        <begin position="147"/>
        <end position="148"/>
    </location>
    <ligand>
        <name>thiamine diphosphate</name>
        <dbReference type="ChEBI" id="CHEBI:58937"/>
    </ligand>
</feature>
<feature type="binding site" evidence="1">
    <location>
        <position position="175"/>
    </location>
    <ligand>
        <name>Mg(2+)</name>
        <dbReference type="ChEBI" id="CHEBI:18420"/>
    </ligand>
</feature>
<feature type="binding site" evidence="1">
    <location>
        <position position="175"/>
    </location>
    <ligand>
        <name>thiamine diphosphate</name>
        <dbReference type="ChEBI" id="CHEBI:58937"/>
    </ligand>
</feature>
<feature type="binding site" evidence="1">
    <location>
        <position position="284"/>
    </location>
    <ligand>
        <name>thiamine diphosphate</name>
        <dbReference type="ChEBI" id="CHEBI:58937"/>
    </ligand>
</feature>
<feature type="binding site" evidence="1">
    <location>
        <position position="364"/>
    </location>
    <ligand>
        <name>thiamine diphosphate</name>
        <dbReference type="ChEBI" id="CHEBI:58937"/>
    </ligand>
</feature>
<dbReference type="EC" id="2.2.1.7" evidence="1"/>
<dbReference type="EMBL" id="CP001472">
    <property type="protein sequence ID" value="ACO33552.1"/>
    <property type="molecule type" value="Genomic_DNA"/>
</dbReference>
<dbReference type="RefSeq" id="WP_015897877.1">
    <property type="nucleotide sequence ID" value="NC_012483.1"/>
</dbReference>
<dbReference type="SMR" id="C1F3C4"/>
<dbReference type="FunCoup" id="C1F3C4">
    <property type="interactions" value="491"/>
</dbReference>
<dbReference type="STRING" id="240015.ACP_2818"/>
<dbReference type="KEGG" id="aca:ACP_2818"/>
<dbReference type="eggNOG" id="COG1154">
    <property type="taxonomic scope" value="Bacteria"/>
</dbReference>
<dbReference type="HOGENOM" id="CLU_009227_1_4_0"/>
<dbReference type="InParanoid" id="C1F3C4"/>
<dbReference type="OrthoDB" id="9803371at2"/>
<dbReference type="UniPathway" id="UPA00064">
    <property type="reaction ID" value="UER00091"/>
</dbReference>
<dbReference type="Proteomes" id="UP000002207">
    <property type="component" value="Chromosome"/>
</dbReference>
<dbReference type="GO" id="GO:0005829">
    <property type="term" value="C:cytosol"/>
    <property type="evidence" value="ECO:0007669"/>
    <property type="project" value="TreeGrafter"/>
</dbReference>
<dbReference type="GO" id="GO:0008661">
    <property type="term" value="F:1-deoxy-D-xylulose-5-phosphate synthase activity"/>
    <property type="evidence" value="ECO:0007669"/>
    <property type="project" value="UniProtKB-UniRule"/>
</dbReference>
<dbReference type="GO" id="GO:0000287">
    <property type="term" value="F:magnesium ion binding"/>
    <property type="evidence" value="ECO:0007669"/>
    <property type="project" value="UniProtKB-UniRule"/>
</dbReference>
<dbReference type="GO" id="GO:0030976">
    <property type="term" value="F:thiamine pyrophosphate binding"/>
    <property type="evidence" value="ECO:0007669"/>
    <property type="project" value="UniProtKB-UniRule"/>
</dbReference>
<dbReference type="GO" id="GO:0052865">
    <property type="term" value="P:1-deoxy-D-xylulose 5-phosphate biosynthetic process"/>
    <property type="evidence" value="ECO:0007669"/>
    <property type="project" value="UniProtKB-UniPathway"/>
</dbReference>
<dbReference type="GO" id="GO:0019288">
    <property type="term" value="P:isopentenyl diphosphate biosynthetic process, methylerythritol 4-phosphate pathway"/>
    <property type="evidence" value="ECO:0007669"/>
    <property type="project" value="TreeGrafter"/>
</dbReference>
<dbReference type="GO" id="GO:0016114">
    <property type="term" value="P:terpenoid biosynthetic process"/>
    <property type="evidence" value="ECO:0007669"/>
    <property type="project" value="UniProtKB-UniRule"/>
</dbReference>
<dbReference type="GO" id="GO:0009228">
    <property type="term" value="P:thiamine biosynthetic process"/>
    <property type="evidence" value="ECO:0007669"/>
    <property type="project" value="UniProtKB-UniRule"/>
</dbReference>
<dbReference type="CDD" id="cd02007">
    <property type="entry name" value="TPP_DXS"/>
    <property type="match status" value="1"/>
</dbReference>
<dbReference type="CDD" id="cd07033">
    <property type="entry name" value="TPP_PYR_DXS_TK_like"/>
    <property type="match status" value="1"/>
</dbReference>
<dbReference type="FunFam" id="3.40.50.920:FF:000002">
    <property type="entry name" value="1-deoxy-D-xylulose-5-phosphate synthase"/>
    <property type="match status" value="1"/>
</dbReference>
<dbReference type="FunFam" id="3.40.50.970:FF:000005">
    <property type="entry name" value="1-deoxy-D-xylulose-5-phosphate synthase"/>
    <property type="match status" value="1"/>
</dbReference>
<dbReference type="Gene3D" id="3.40.50.920">
    <property type="match status" value="1"/>
</dbReference>
<dbReference type="Gene3D" id="3.40.50.970">
    <property type="match status" value="2"/>
</dbReference>
<dbReference type="HAMAP" id="MF_00315">
    <property type="entry name" value="DXP_synth"/>
    <property type="match status" value="1"/>
</dbReference>
<dbReference type="InterPro" id="IPR005477">
    <property type="entry name" value="Dxylulose-5-P_synthase"/>
</dbReference>
<dbReference type="InterPro" id="IPR029061">
    <property type="entry name" value="THDP-binding"/>
</dbReference>
<dbReference type="InterPro" id="IPR009014">
    <property type="entry name" value="Transketo_C/PFOR_II"/>
</dbReference>
<dbReference type="InterPro" id="IPR005475">
    <property type="entry name" value="Transketolase-like_Pyr-bd"/>
</dbReference>
<dbReference type="InterPro" id="IPR020826">
    <property type="entry name" value="Transketolase_BS"/>
</dbReference>
<dbReference type="InterPro" id="IPR033248">
    <property type="entry name" value="Transketolase_C"/>
</dbReference>
<dbReference type="InterPro" id="IPR049557">
    <property type="entry name" value="Transketolase_CS"/>
</dbReference>
<dbReference type="NCBIfam" id="TIGR00204">
    <property type="entry name" value="dxs"/>
    <property type="match status" value="1"/>
</dbReference>
<dbReference type="NCBIfam" id="NF003933">
    <property type="entry name" value="PRK05444.2-2"/>
    <property type="match status" value="1"/>
</dbReference>
<dbReference type="PANTHER" id="PTHR43322">
    <property type="entry name" value="1-D-DEOXYXYLULOSE 5-PHOSPHATE SYNTHASE-RELATED"/>
    <property type="match status" value="1"/>
</dbReference>
<dbReference type="PANTHER" id="PTHR43322:SF5">
    <property type="entry name" value="1-DEOXY-D-XYLULOSE-5-PHOSPHATE SYNTHASE, CHLOROPLASTIC"/>
    <property type="match status" value="1"/>
</dbReference>
<dbReference type="Pfam" id="PF13292">
    <property type="entry name" value="DXP_synthase_N"/>
    <property type="match status" value="1"/>
</dbReference>
<dbReference type="Pfam" id="PF02779">
    <property type="entry name" value="Transket_pyr"/>
    <property type="match status" value="1"/>
</dbReference>
<dbReference type="Pfam" id="PF02780">
    <property type="entry name" value="Transketolase_C"/>
    <property type="match status" value="1"/>
</dbReference>
<dbReference type="SMART" id="SM00861">
    <property type="entry name" value="Transket_pyr"/>
    <property type="match status" value="1"/>
</dbReference>
<dbReference type="SUPFAM" id="SSF52518">
    <property type="entry name" value="Thiamin diphosphate-binding fold (THDP-binding)"/>
    <property type="match status" value="2"/>
</dbReference>
<dbReference type="SUPFAM" id="SSF52922">
    <property type="entry name" value="TK C-terminal domain-like"/>
    <property type="match status" value="1"/>
</dbReference>
<dbReference type="PROSITE" id="PS00801">
    <property type="entry name" value="TRANSKETOLASE_1"/>
    <property type="match status" value="1"/>
</dbReference>
<dbReference type="PROSITE" id="PS00802">
    <property type="entry name" value="TRANSKETOLASE_2"/>
    <property type="match status" value="1"/>
</dbReference>
<keyword id="KW-0414">Isoprene biosynthesis</keyword>
<keyword id="KW-0460">Magnesium</keyword>
<keyword id="KW-0479">Metal-binding</keyword>
<keyword id="KW-1185">Reference proteome</keyword>
<keyword id="KW-0784">Thiamine biosynthesis</keyword>
<keyword id="KW-0786">Thiamine pyrophosphate</keyword>
<keyword id="KW-0808">Transferase</keyword>
<protein>
    <recommendedName>
        <fullName evidence="1">1-deoxy-D-xylulose-5-phosphate synthase</fullName>
        <ecNumber evidence="1">2.2.1.7</ecNumber>
    </recommendedName>
    <alternativeName>
        <fullName evidence="1">1-deoxyxylulose-5-phosphate synthase</fullName>
        <shortName evidence="1">DXP synthase</shortName>
        <shortName evidence="1">DXPS</shortName>
    </alternativeName>
</protein>
<gene>
    <name evidence="1" type="primary">dxs</name>
    <name type="ordered locus">ACP_2818</name>
</gene>